<sequence>MPLHHLTRFPRLELIGAPTPLEYLPRLSDYPGREIYIKRDDVTPIAMGGNKLRKLEFLVADALREGADTLITAGAIQSNHVRQTAAVAAKLGLHCVALLENPIGTTAENYLTNGNRLLLDLFNTQIEMCDVLTDPDAQLQTLATRIEAQGFRPYVIPVGGSSALGAMGYVESALEIAQQCEEVVGLSSVVVASGSAGTHAGLAVGLEHLMPDVELIGVTVSRSVAEQKPKVIALQQAIAGQLALTATADIHLWDDYFAPGYGVPNDAGMEAVKLLASLEGVLLDPVYTGKAMAGLIDGISQKRFNDDGPILFIHTGGAPALFAYHPHV</sequence>
<keyword id="KW-0456">Lyase</keyword>
<keyword id="KW-0663">Pyridoxal phosphate</keyword>
<organism>
    <name type="scientific">Salmonella paratyphi A (strain AKU_12601)</name>
    <dbReference type="NCBI Taxonomy" id="554290"/>
    <lineage>
        <taxon>Bacteria</taxon>
        <taxon>Pseudomonadati</taxon>
        <taxon>Pseudomonadota</taxon>
        <taxon>Gammaproteobacteria</taxon>
        <taxon>Enterobacterales</taxon>
        <taxon>Enterobacteriaceae</taxon>
        <taxon>Salmonella</taxon>
    </lineage>
</organism>
<proteinExistence type="inferred from homology"/>
<name>DCYD_SALPK</name>
<protein>
    <recommendedName>
        <fullName evidence="1">D-cysteine desulfhydrase</fullName>
        <ecNumber evidence="1">4.4.1.15</ecNumber>
    </recommendedName>
</protein>
<gene>
    <name evidence="1" type="primary">dcyD</name>
    <name type="ordered locus">SSPA0854</name>
</gene>
<reference key="1">
    <citation type="journal article" date="2009" name="BMC Genomics">
        <title>Pseudogene accumulation in the evolutionary histories of Salmonella enterica serovars Paratyphi A and Typhi.</title>
        <authorList>
            <person name="Holt K.E."/>
            <person name="Thomson N.R."/>
            <person name="Wain J."/>
            <person name="Langridge G.C."/>
            <person name="Hasan R."/>
            <person name="Bhutta Z.A."/>
            <person name="Quail M.A."/>
            <person name="Norbertczak H."/>
            <person name="Walker D."/>
            <person name="Simmonds M."/>
            <person name="White B."/>
            <person name="Bason N."/>
            <person name="Mungall K."/>
            <person name="Dougan G."/>
            <person name="Parkhill J."/>
        </authorList>
    </citation>
    <scope>NUCLEOTIDE SEQUENCE [LARGE SCALE GENOMIC DNA]</scope>
    <source>
        <strain>AKU_12601</strain>
    </source>
</reference>
<comment type="function">
    <text evidence="1">Catalyzes the alpha,beta-elimination reaction of D-cysteine and of several D-cysteine derivatives. It could be a defense mechanism against D-cysteine.</text>
</comment>
<comment type="catalytic activity">
    <reaction evidence="1">
        <text>D-cysteine + H2O = hydrogen sulfide + pyruvate + NH4(+) + H(+)</text>
        <dbReference type="Rhea" id="RHEA:11268"/>
        <dbReference type="ChEBI" id="CHEBI:15361"/>
        <dbReference type="ChEBI" id="CHEBI:15377"/>
        <dbReference type="ChEBI" id="CHEBI:15378"/>
        <dbReference type="ChEBI" id="CHEBI:28938"/>
        <dbReference type="ChEBI" id="CHEBI:29919"/>
        <dbReference type="ChEBI" id="CHEBI:35236"/>
        <dbReference type="EC" id="4.4.1.15"/>
    </reaction>
</comment>
<comment type="cofactor">
    <cofactor evidence="1">
        <name>pyridoxal 5'-phosphate</name>
        <dbReference type="ChEBI" id="CHEBI:597326"/>
    </cofactor>
</comment>
<comment type="subunit">
    <text evidence="1">Homodimer.</text>
</comment>
<comment type="similarity">
    <text evidence="1">Belongs to the ACC deaminase/D-cysteine desulfhydrase family.</text>
</comment>
<dbReference type="EC" id="4.4.1.15" evidence="1"/>
<dbReference type="EMBL" id="FM200053">
    <property type="protein sequence ID" value="CAR58997.1"/>
    <property type="molecule type" value="Genomic_DNA"/>
</dbReference>
<dbReference type="RefSeq" id="WP_001128194.1">
    <property type="nucleotide sequence ID" value="NC_011147.1"/>
</dbReference>
<dbReference type="SMR" id="B5BGB4"/>
<dbReference type="KEGG" id="sek:SSPA0854"/>
<dbReference type="HOGENOM" id="CLU_048897_1_0_6"/>
<dbReference type="Proteomes" id="UP000001869">
    <property type="component" value="Chromosome"/>
</dbReference>
<dbReference type="GO" id="GO:0019148">
    <property type="term" value="F:D-cysteine desulfhydrase activity"/>
    <property type="evidence" value="ECO:0007669"/>
    <property type="project" value="UniProtKB-UniRule"/>
</dbReference>
<dbReference type="GO" id="GO:0046416">
    <property type="term" value="P:D-amino acid metabolic process"/>
    <property type="evidence" value="ECO:0007669"/>
    <property type="project" value="UniProtKB-UniRule"/>
</dbReference>
<dbReference type="CDD" id="cd06449">
    <property type="entry name" value="ACCD"/>
    <property type="match status" value="1"/>
</dbReference>
<dbReference type="FunFam" id="3.40.50.1100:FF:000019">
    <property type="entry name" value="D-cysteine desulfhydrase"/>
    <property type="match status" value="1"/>
</dbReference>
<dbReference type="Gene3D" id="3.40.50.1100">
    <property type="match status" value="2"/>
</dbReference>
<dbReference type="HAMAP" id="MF_01045">
    <property type="entry name" value="D_Cys_desulfhydr"/>
    <property type="match status" value="1"/>
</dbReference>
<dbReference type="InterPro" id="IPR027278">
    <property type="entry name" value="ACCD_DCysDesulf"/>
</dbReference>
<dbReference type="InterPro" id="IPR005966">
    <property type="entry name" value="D-Cys_desShydrase"/>
</dbReference>
<dbReference type="InterPro" id="IPR023702">
    <property type="entry name" value="D_Cys_desulphydr_bac"/>
</dbReference>
<dbReference type="InterPro" id="IPR001926">
    <property type="entry name" value="TrpB-like_PALP"/>
</dbReference>
<dbReference type="InterPro" id="IPR036052">
    <property type="entry name" value="TrpB-like_PALP_sf"/>
</dbReference>
<dbReference type="NCBIfam" id="TIGR01275">
    <property type="entry name" value="ACC_deam_rel"/>
    <property type="match status" value="1"/>
</dbReference>
<dbReference type="NCBIfam" id="NF003029">
    <property type="entry name" value="PRK03910.1-1"/>
    <property type="match status" value="1"/>
</dbReference>
<dbReference type="NCBIfam" id="NF003030">
    <property type="entry name" value="PRK03910.1-3"/>
    <property type="match status" value="1"/>
</dbReference>
<dbReference type="NCBIfam" id="NF003032">
    <property type="entry name" value="PRK03910.1-5"/>
    <property type="match status" value="1"/>
</dbReference>
<dbReference type="PANTHER" id="PTHR43780">
    <property type="entry name" value="1-AMINOCYCLOPROPANE-1-CARBOXYLATE DEAMINASE-RELATED"/>
    <property type="match status" value="1"/>
</dbReference>
<dbReference type="PANTHER" id="PTHR43780:SF2">
    <property type="entry name" value="1-AMINOCYCLOPROPANE-1-CARBOXYLATE DEAMINASE-RELATED"/>
    <property type="match status" value="1"/>
</dbReference>
<dbReference type="Pfam" id="PF00291">
    <property type="entry name" value="PALP"/>
    <property type="match status" value="1"/>
</dbReference>
<dbReference type="PIRSF" id="PIRSF006278">
    <property type="entry name" value="ACCD_DCysDesulf"/>
    <property type="match status" value="1"/>
</dbReference>
<dbReference type="SUPFAM" id="SSF53686">
    <property type="entry name" value="Tryptophan synthase beta subunit-like PLP-dependent enzymes"/>
    <property type="match status" value="1"/>
</dbReference>
<feature type="chain" id="PRO_1000136171" description="D-cysteine desulfhydrase">
    <location>
        <begin position="1"/>
        <end position="328"/>
    </location>
</feature>
<feature type="modified residue" description="N6-(pyridoxal phosphate)lysine" evidence="1">
    <location>
        <position position="51"/>
    </location>
</feature>
<evidence type="ECO:0000255" key="1">
    <source>
        <dbReference type="HAMAP-Rule" id="MF_01045"/>
    </source>
</evidence>
<accession>B5BGB4</accession>